<keyword id="KW-0002">3D-structure</keyword>
<keyword id="KW-0007">Acetylation</keyword>
<keyword id="KW-0010">Activator</keyword>
<keyword id="KW-0877">Alternative promoter usage</keyword>
<keyword id="KW-0025">Alternative splicing</keyword>
<keyword id="KW-0090">Biological rhythms</keyword>
<keyword id="KW-0963">Cytoplasm</keyword>
<keyword id="KW-0539">Nucleus</keyword>
<keyword id="KW-0597">Phosphoprotein</keyword>
<keyword id="KW-1267">Proteomics identification</keyword>
<keyword id="KW-1185">Reference proteome</keyword>
<keyword id="KW-0694">RNA-binding</keyword>
<keyword id="KW-0804">Transcription</keyword>
<keyword id="KW-0805">Transcription regulation</keyword>
<keyword id="KW-0832">Ubl conjugation</keyword>
<dbReference type="EMBL" id="AF108205">
    <property type="protein sequence ID" value="AAF19083.1"/>
    <property type="molecule type" value="Genomic_DNA"/>
</dbReference>
<dbReference type="EMBL" id="AF108193">
    <property type="protein sequence ID" value="AAF19083.1"/>
    <property type="status" value="JOINED"/>
    <property type="molecule type" value="Genomic_DNA"/>
</dbReference>
<dbReference type="EMBL" id="AF108194">
    <property type="protein sequence ID" value="AAF19083.1"/>
    <property type="status" value="JOINED"/>
    <property type="molecule type" value="Genomic_DNA"/>
</dbReference>
<dbReference type="EMBL" id="AF108195">
    <property type="protein sequence ID" value="AAF19083.1"/>
    <property type="status" value="JOINED"/>
    <property type="molecule type" value="Genomic_DNA"/>
</dbReference>
<dbReference type="EMBL" id="AF108196">
    <property type="protein sequence ID" value="AAF19083.1"/>
    <property type="status" value="JOINED"/>
    <property type="molecule type" value="Genomic_DNA"/>
</dbReference>
<dbReference type="EMBL" id="AF108197">
    <property type="protein sequence ID" value="AAF19083.1"/>
    <property type="status" value="JOINED"/>
    <property type="molecule type" value="Genomic_DNA"/>
</dbReference>
<dbReference type="EMBL" id="AF108198">
    <property type="protein sequence ID" value="AAF19083.1"/>
    <property type="status" value="JOINED"/>
    <property type="molecule type" value="Genomic_DNA"/>
</dbReference>
<dbReference type="EMBL" id="AF108199">
    <property type="protein sequence ID" value="AAF19083.1"/>
    <property type="status" value="JOINED"/>
    <property type="molecule type" value="Genomic_DNA"/>
</dbReference>
<dbReference type="EMBL" id="AF108200">
    <property type="protein sequence ID" value="AAF19083.1"/>
    <property type="status" value="JOINED"/>
    <property type="molecule type" value="Genomic_DNA"/>
</dbReference>
<dbReference type="EMBL" id="AF108201">
    <property type="protein sequence ID" value="AAF19083.1"/>
    <property type="status" value="JOINED"/>
    <property type="molecule type" value="Genomic_DNA"/>
</dbReference>
<dbReference type="EMBL" id="AF108202">
    <property type="protein sequence ID" value="AAF19083.1"/>
    <property type="status" value="JOINED"/>
    <property type="molecule type" value="Genomic_DNA"/>
</dbReference>
<dbReference type="EMBL" id="AF108203">
    <property type="protein sequence ID" value="AAF19083.1"/>
    <property type="status" value="JOINED"/>
    <property type="molecule type" value="Genomic_DNA"/>
</dbReference>
<dbReference type="EMBL" id="AF108204">
    <property type="protein sequence ID" value="AAF19083.1"/>
    <property type="status" value="JOINED"/>
    <property type="molecule type" value="Genomic_DNA"/>
</dbReference>
<dbReference type="EMBL" id="AF106698">
    <property type="protein sequence ID" value="AAF18573.1"/>
    <property type="molecule type" value="mRNA"/>
</dbReference>
<dbReference type="EMBL" id="AF159714">
    <property type="protein sequence ID" value="AAD51615.1"/>
    <property type="molecule type" value="mRNA"/>
</dbReference>
<dbReference type="EMBL" id="AF186379">
    <property type="protein sequence ID" value="AAD56250.1"/>
    <property type="molecule type" value="mRNA"/>
</dbReference>
<dbReference type="EMBL" id="HQ695733">
    <property type="protein sequence ID" value="ADW77180.1"/>
    <property type="molecule type" value="mRNA"/>
</dbReference>
<dbReference type="EMBL" id="JQ772116">
    <property type="protein sequence ID" value="AFK29753.1"/>
    <property type="molecule type" value="mRNA"/>
</dbReference>
<dbReference type="EMBL" id="JQ772117">
    <property type="protein sequence ID" value="AFK29754.1"/>
    <property type="molecule type" value="mRNA"/>
</dbReference>
<dbReference type="EMBL" id="JQ772118">
    <property type="protein sequence ID" value="AFK29755.1"/>
    <property type="molecule type" value="mRNA"/>
</dbReference>
<dbReference type="EMBL" id="JQ772119">
    <property type="protein sequence ID" value="AFK29756.1"/>
    <property type="molecule type" value="mRNA"/>
</dbReference>
<dbReference type="EMBL" id="JQ772120">
    <property type="protein sequence ID" value="AFK29757.1"/>
    <property type="molecule type" value="mRNA"/>
</dbReference>
<dbReference type="EMBL" id="AB061325">
    <property type="protein sequence ID" value="BAE46508.1"/>
    <property type="molecule type" value="mRNA"/>
</dbReference>
<dbReference type="EMBL" id="EU280319">
    <property type="protein sequence ID" value="ABX44665.1"/>
    <property type="molecule type" value="Genomic_DNA"/>
</dbReference>
<dbReference type="EMBL" id="AK296591">
    <property type="protein sequence ID" value="BAH12392.1"/>
    <property type="molecule type" value="mRNA"/>
</dbReference>
<dbReference type="EMBL" id="AC092834">
    <property type="protein sequence ID" value="AAY41058.1"/>
    <property type="molecule type" value="Genomic_DNA"/>
</dbReference>
<dbReference type="EMBL" id="AC097508">
    <property type="status" value="NOT_ANNOTATED_CDS"/>
    <property type="molecule type" value="Genomic_DNA"/>
</dbReference>
<dbReference type="EMBL" id="CH471069">
    <property type="protein sequence ID" value="EAW92811.1"/>
    <property type="molecule type" value="Genomic_DNA"/>
</dbReference>
<dbReference type="CCDS" id="CCDS3429.1">
    <molecule id="Q9UBK2-1"/>
</dbReference>
<dbReference type="CCDS" id="CCDS87211.1">
    <molecule id="Q9UBK2-9"/>
</dbReference>
<dbReference type="RefSeq" id="NP_001317680.1">
    <molecule id="Q9UBK2-3"/>
    <property type="nucleotide sequence ID" value="NM_001330751.2"/>
</dbReference>
<dbReference type="RefSeq" id="NP_001317681.1">
    <molecule id="Q9UBK2-4"/>
    <property type="nucleotide sequence ID" value="NM_001330752.2"/>
</dbReference>
<dbReference type="RefSeq" id="NP_001317682.1">
    <molecule id="Q9UBK2-9"/>
    <property type="nucleotide sequence ID" value="NM_001330753.2"/>
</dbReference>
<dbReference type="RefSeq" id="NP_001341754.1">
    <molecule id="Q9UBK2-3"/>
    <property type="nucleotide sequence ID" value="NM_001354825.2"/>
</dbReference>
<dbReference type="RefSeq" id="NP_001341755.1">
    <molecule id="Q9UBK2-9"/>
    <property type="nucleotide sequence ID" value="NM_001354826.2"/>
</dbReference>
<dbReference type="RefSeq" id="NP_037393.1">
    <molecule id="Q9UBK2-1"/>
    <property type="nucleotide sequence ID" value="NM_013261.5"/>
</dbReference>
<dbReference type="RefSeq" id="XP_011512073.1">
    <molecule id="Q9UBK2-9"/>
    <property type="nucleotide sequence ID" value="XM_011513771.2"/>
</dbReference>
<dbReference type="RefSeq" id="XP_047305502.1">
    <molecule id="Q9UBK2-4"/>
    <property type="nucleotide sequence ID" value="XM_047449546.1"/>
</dbReference>
<dbReference type="RefSeq" id="XP_047305509.1">
    <molecule id="Q9UBK2-9"/>
    <property type="nucleotide sequence ID" value="XM_047449553.1"/>
</dbReference>
<dbReference type="RefSeq" id="XP_054204781.1">
    <molecule id="Q9UBK2-4"/>
    <property type="nucleotide sequence ID" value="XM_054348806.1"/>
</dbReference>
<dbReference type="RefSeq" id="XP_054204788.1">
    <molecule id="Q9UBK2-9"/>
    <property type="nucleotide sequence ID" value="XM_054348813.1"/>
</dbReference>
<dbReference type="PDB" id="1XB7">
    <property type="method" value="X-ray"/>
    <property type="resolution" value="2.50 A"/>
    <property type="chains" value="P=205-216"/>
</dbReference>
<dbReference type="PDB" id="3B1M">
    <property type="method" value="X-ray"/>
    <property type="resolution" value="1.60 A"/>
    <property type="chains" value="B=136-154"/>
</dbReference>
<dbReference type="PDB" id="3CS8">
    <property type="method" value="X-ray"/>
    <property type="resolution" value="2.30 A"/>
    <property type="chains" value="B=141-152"/>
</dbReference>
<dbReference type="PDB" id="3D24">
    <property type="method" value="X-ray"/>
    <property type="resolution" value="2.11 A"/>
    <property type="chains" value="B/D=198-219"/>
</dbReference>
<dbReference type="PDB" id="3U9Q">
    <property type="method" value="X-ray"/>
    <property type="resolution" value="1.52 A"/>
    <property type="chains" value="B=142-150"/>
</dbReference>
<dbReference type="PDB" id="3V9T">
    <property type="method" value="X-ray"/>
    <property type="resolution" value="1.65 A"/>
    <property type="chains" value="C=136-154"/>
</dbReference>
<dbReference type="PDB" id="3V9V">
    <property type="method" value="X-ray"/>
    <property type="resolution" value="1.60 A"/>
    <property type="chains" value="C=136-154"/>
</dbReference>
<dbReference type="PDB" id="4QJR">
    <property type="method" value="X-ray"/>
    <property type="resolution" value="2.40 A"/>
    <property type="chains" value="B=139-152"/>
</dbReference>
<dbReference type="PDB" id="4QK4">
    <property type="method" value="X-ray"/>
    <property type="resolution" value="2.81 A"/>
    <property type="chains" value="B=139-152"/>
</dbReference>
<dbReference type="PDB" id="5Q0I">
    <property type="method" value="X-ray"/>
    <property type="resolution" value="1.70 A"/>
    <property type="chains" value="B=141-152"/>
</dbReference>
<dbReference type="PDB" id="5TWO">
    <property type="method" value="X-ray"/>
    <property type="resolution" value="1.93 A"/>
    <property type="chains" value="B=138-152"/>
</dbReference>
<dbReference type="PDB" id="5UNJ">
    <property type="method" value="X-ray"/>
    <property type="resolution" value="1.96 A"/>
    <property type="chains" value="C=139-152"/>
</dbReference>
<dbReference type="PDB" id="5Z5S">
    <property type="method" value="X-ray"/>
    <property type="resolution" value="1.80 A"/>
    <property type="chains" value="C=136-154"/>
</dbReference>
<dbReference type="PDB" id="5Z6S">
    <property type="method" value="X-ray"/>
    <property type="resolution" value="1.80 A"/>
    <property type="chains" value="C=136-154"/>
</dbReference>
<dbReference type="PDB" id="6AD9">
    <property type="method" value="X-ray"/>
    <property type="resolution" value="2.20 A"/>
    <property type="chains" value="B=141-152"/>
</dbReference>
<dbReference type="PDB" id="6FZF">
    <property type="method" value="X-ray"/>
    <property type="resolution" value="1.95 A"/>
    <property type="chains" value="C/D=139-152"/>
</dbReference>
<dbReference type="PDB" id="6FZP">
    <property type="method" value="X-ray"/>
    <property type="resolution" value="2.30 A"/>
    <property type="chains" value="C=139-152"/>
</dbReference>
<dbReference type="PDB" id="6IZM">
    <property type="method" value="X-ray"/>
    <property type="resolution" value="1.80 A"/>
    <property type="chains" value="C=136-154"/>
</dbReference>
<dbReference type="PDB" id="6IZN">
    <property type="method" value="X-ray"/>
    <property type="resolution" value="1.75 A"/>
    <property type="chains" value="C=136-154"/>
</dbReference>
<dbReference type="PDB" id="6K0T">
    <property type="method" value="X-ray"/>
    <property type="resolution" value="1.84 A"/>
    <property type="chains" value="B/D=139-150"/>
</dbReference>
<dbReference type="PDB" id="6KXX">
    <property type="method" value="X-ray"/>
    <property type="resolution" value="1.95 A"/>
    <property type="chains" value="B=135-156"/>
</dbReference>
<dbReference type="PDB" id="6KXY">
    <property type="method" value="X-ray"/>
    <property type="resolution" value="2.00 A"/>
    <property type="chains" value="B=135-156"/>
</dbReference>
<dbReference type="PDB" id="6LN4">
    <property type="method" value="X-ray"/>
    <property type="resolution" value="2.61 A"/>
    <property type="chains" value="B=207-216"/>
</dbReference>
<dbReference type="PDB" id="6MS7">
    <property type="method" value="X-ray"/>
    <property type="resolution" value="1.43 A"/>
    <property type="chains" value="B=141-151"/>
</dbReference>
<dbReference type="PDB" id="6NWK">
    <property type="method" value="X-ray"/>
    <property type="resolution" value="1.65 A"/>
    <property type="chains" value="B=141-152"/>
</dbReference>
<dbReference type="PDB" id="6NWL">
    <property type="method" value="X-ray"/>
    <property type="resolution" value="1.59 A"/>
    <property type="chains" value="B=141-152"/>
</dbReference>
<dbReference type="PDB" id="6T1V">
    <property type="method" value="X-ray"/>
    <property type="resolution" value="2.21 A"/>
    <property type="chains" value="C=139-152"/>
</dbReference>
<dbReference type="PDB" id="6W9K">
    <property type="method" value="X-ray"/>
    <property type="resolution" value="1.60 A"/>
    <property type="chains" value="B=142-151"/>
</dbReference>
<dbReference type="PDB" id="6W9L">
    <property type="method" value="X-ray"/>
    <property type="resolution" value="1.45 A"/>
    <property type="chains" value="B=141-152"/>
</dbReference>
<dbReference type="PDB" id="7E2E">
    <property type="method" value="X-ray"/>
    <property type="resolution" value="2.70 A"/>
    <property type="chains" value="P/Q=205-216"/>
</dbReference>
<dbReference type="PDB" id="7KHT">
    <property type="method" value="X-ray"/>
    <property type="resolution" value="2.50 A"/>
    <property type="chains" value="B=139-152"/>
</dbReference>
<dbReference type="PDB" id="7PRV">
    <property type="method" value="X-ray"/>
    <property type="resolution" value="2.70 A"/>
    <property type="chains" value="F=134-154"/>
</dbReference>
<dbReference type="PDB" id="7PRW">
    <property type="method" value="X-ray"/>
    <property type="resolution" value="2.50 A"/>
    <property type="chains" value="F=134-154"/>
</dbReference>
<dbReference type="PDB" id="7PRX">
    <property type="method" value="X-ray"/>
    <property type="resolution" value="2.20 A"/>
    <property type="chains" value="B=134-154"/>
</dbReference>
<dbReference type="PDB" id="8BF1">
    <property type="method" value="X-ray"/>
    <property type="resolution" value="1.36 A"/>
    <property type="chains" value="B=136-154"/>
</dbReference>
<dbReference type="PDB" id="8DK4">
    <property type="method" value="X-ray"/>
    <property type="resolution" value="2.60 A"/>
    <property type="chains" value="B=138-152"/>
</dbReference>
<dbReference type="PDB" id="9F7W">
    <property type="method" value="X-ray"/>
    <property type="resolution" value="1.25 A"/>
    <property type="chains" value="B=136-154"/>
</dbReference>
<dbReference type="PDB" id="9F7X">
    <property type="method" value="X-ray"/>
    <property type="resolution" value="1.63 A"/>
    <property type="chains" value="B=136-154"/>
</dbReference>
<dbReference type="PDBsum" id="1XB7"/>
<dbReference type="PDBsum" id="3B1M"/>
<dbReference type="PDBsum" id="3CS8"/>
<dbReference type="PDBsum" id="3D24"/>
<dbReference type="PDBsum" id="3U9Q"/>
<dbReference type="PDBsum" id="3V9T"/>
<dbReference type="PDBsum" id="3V9V"/>
<dbReference type="PDBsum" id="4QJR"/>
<dbReference type="PDBsum" id="4QK4"/>
<dbReference type="PDBsum" id="5Q0I"/>
<dbReference type="PDBsum" id="5TWO"/>
<dbReference type="PDBsum" id="5UNJ"/>
<dbReference type="PDBsum" id="5Z5S"/>
<dbReference type="PDBsum" id="5Z6S"/>
<dbReference type="PDBsum" id="6AD9"/>
<dbReference type="PDBsum" id="6FZF"/>
<dbReference type="PDBsum" id="6FZP"/>
<dbReference type="PDBsum" id="6IZM"/>
<dbReference type="PDBsum" id="6IZN"/>
<dbReference type="PDBsum" id="6K0T"/>
<dbReference type="PDBsum" id="6KXX"/>
<dbReference type="PDBsum" id="6KXY"/>
<dbReference type="PDBsum" id="6LN4"/>
<dbReference type="PDBsum" id="6MS7"/>
<dbReference type="PDBsum" id="6NWK"/>
<dbReference type="PDBsum" id="6NWL"/>
<dbReference type="PDBsum" id="6T1V"/>
<dbReference type="PDBsum" id="6W9K"/>
<dbReference type="PDBsum" id="6W9L"/>
<dbReference type="PDBsum" id="7E2E"/>
<dbReference type="PDBsum" id="7KHT"/>
<dbReference type="PDBsum" id="7PRV"/>
<dbReference type="PDBsum" id="7PRW"/>
<dbReference type="PDBsum" id="7PRX"/>
<dbReference type="PDBsum" id="8BF1"/>
<dbReference type="PDBsum" id="8DK4"/>
<dbReference type="PDBsum" id="9F7W"/>
<dbReference type="PDBsum" id="9F7X"/>
<dbReference type="SMR" id="Q9UBK2"/>
<dbReference type="BioGRID" id="116097">
    <property type="interactions" value="77"/>
</dbReference>
<dbReference type="CORUM" id="Q9UBK2"/>
<dbReference type="DIP" id="DIP-38449N"/>
<dbReference type="ELM" id="Q9UBK2"/>
<dbReference type="FunCoup" id="Q9UBK2">
    <property type="interactions" value="2932"/>
</dbReference>
<dbReference type="IntAct" id="Q9UBK2">
    <property type="interactions" value="19"/>
</dbReference>
<dbReference type="MINT" id="Q9UBK2"/>
<dbReference type="STRING" id="9606.ENSP00000264867"/>
<dbReference type="ChEMBL" id="CHEMBL6116"/>
<dbReference type="GlyGen" id="Q9UBK2">
    <property type="glycosylation" value="2 sites, 1 N-linked glycan (1 site), 1 O-linked glycan (1 site)"/>
</dbReference>
<dbReference type="iPTMnet" id="Q9UBK2"/>
<dbReference type="PhosphoSitePlus" id="Q9UBK2"/>
<dbReference type="BioMuta" id="PPARGC1A"/>
<dbReference type="DMDM" id="47117335"/>
<dbReference type="jPOST" id="Q9UBK2"/>
<dbReference type="MassIVE" id="Q9UBK2"/>
<dbReference type="PaxDb" id="9606-ENSP00000264867"/>
<dbReference type="PeptideAtlas" id="Q9UBK2"/>
<dbReference type="Antibodypedia" id="10142">
    <property type="antibodies" value="339 antibodies from 39 providers"/>
</dbReference>
<dbReference type="DNASU" id="10891"/>
<dbReference type="Ensembl" id="ENST00000264867.7">
    <molecule id="Q9UBK2-1"/>
    <property type="protein sequence ID" value="ENSP00000264867.2"/>
    <property type="gene ID" value="ENSG00000109819.9"/>
</dbReference>
<dbReference type="Ensembl" id="ENST00000506055.5">
    <molecule id="Q9UBK2-2"/>
    <property type="protein sequence ID" value="ENSP00000423075.1"/>
    <property type="gene ID" value="ENSG00000109819.9"/>
</dbReference>
<dbReference type="Ensembl" id="ENST00000513205.5">
    <molecule id="Q9UBK2-8"/>
    <property type="protein sequence ID" value="ENSP00000421632.1"/>
    <property type="gene ID" value="ENSG00000109819.9"/>
</dbReference>
<dbReference type="Ensembl" id="ENST00000613098.4">
    <molecule id="Q9UBK2-9"/>
    <property type="protein sequence ID" value="ENSP00000481498.1"/>
    <property type="gene ID" value="ENSG00000109819.9"/>
</dbReference>
<dbReference type="GeneID" id="10891"/>
<dbReference type="KEGG" id="hsa:10891"/>
<dbReference type="MANE-Select" id="ENST00000264867.7">
    <property type="protein sequence ID" value="ENSP00000264867.2"/>
    <property type="RefSeq nucleotide sequence ID" value="NM_013261.5"/>
    <property type="RefSeq protein sequence ID" value="NP_037393.1"/>
</dbReference>
<dbReference type="UCSC" id="uc003gqs.3">
    <molecule id="Q9UBK2-1"/>
    <property type="organism name" value="human"/>
</dbReference>
<dbReference type="AGR" id="HGNC:9237"/>
<dbReference type="CTD" id="10891"/>
<dbReference type="DisGeNET" id="10891"/>
<dbReference type="GeneCards" id="PPARGC1A"/>
<dbReference type="HGNC" id="HGNC:9237">
    <property type="gene designation" value="PPARGC1A"/>
</dbReference>
<dbReference type="HPA" id="ENSG00000109819">
    <property type="expression patterns" value="Tissue enhanced (liver)"/>
</dbReference>
<dbReference type="MalaCards" id="PPARGC1A"/>
<dbReference type="MIM" id="604517">
    <property type="type" value="gene"/>
</dbReference>
<dbReference type="neXtProt" id="NX_Q9UBK2"/>
<dbReference type="OpenTargets" id="ENSG00000109819"/>
<dbReference type="Orphanet" id="803">
    <property type="disease" value="Amyotrophic lateral sclerosis"/>
</dbReference>
<dbReference type="PharmGKB" id="PA33558"/>
<dbReference type="VEuPathDB" id="HostDB:ENSG00000109819"/>
<dbReference type="eggNOG" id="ENOG502QSXU">
    <property type="taxonomic scope" value="Eukaryota"/>
</dbReference>
<dbReference type="GeneTree" id="ENSGT00950000183137"/>
<dbReference type="HOGENOM" id="CLU_020104_0_0_1"/>
<dbReference type="InParanoid" id="Q9UBK2"/>
<dbReference type="OMA" id="DLPCNNR"/>
<dbReference type="OrthoDB" id="10047851at2759"/>
<dbReference type="PAN-GO" id="Q9UBK2">
    <property type="GO annotations" value="5 GO annotations based on evolutionary models"/>
</dbReference>
<dbReference type="PhylomeDB" id="Q9UBK2"/>
<dbReference type="TreeFam" id="TF343068"/>
<dbReference type="PathwayCommons" id="Q9UBK2"/>
<dbReference type="Reactome" id="R-HSA-1989781">
    <property type="pathway name" value="PPARA activates gene expression"/>
</dbReference>
<dbReference type="Reactome" id="R-HSA-2151201">
    <property type="pathway name" value="Transcriptional activation of mitochondrial biogenesis"/>
</dbReference>
<dbReference type="Reactome" id="R-HSA-2151209">
    <property type="pathway name" value="Activation of PPARGC1A (PGC-1alpha) by phosphorylation"/>
</dbReference>
<dbReference type="Reactome" id="R-HSA-381340">
    <property type="pathway name" value="Transcriptional regulation of white adipocyte differentiation"/>
</dbReference>
<dbReference type="Reactome" id="R-HSA-3899300">
    <property type="pathway name" value="SUMOylation of transcription cofactors"/>
</dbReference>
<dbReference type="Reactome" id="R-HSA-400253">
    <property type="pathway name" value="Circadian Clock"/>
</dbReference>
<dbReference type="Reactome" id="R-HSA-8939902">
    <property type="pathway name" value="Regulation of RUNX2 expression and activity"/>
</dbReference>
<dbReference type="Reactome" id="R-HSA-9615017">
    <property type="pathway name" value="FOXO-mediated transcription of oxidative stress, metabolic and neuronal genes"/>
</dbReference>
<dbReference type="Reactome" id="R-HSA-9707616">
    <property type="pathway name" value="Heme signaling"/>
</dbReference>
<dbReference type="Reactome" id="R-HSA-9841922">
    <property type="pathway name" value="MLL4 and MLL3 complexes regulate expression of PPARG target genes in adipogenesis and hepatic steatosis"/>
</dbReference>
<dbReference type="Reactome" id="R-HSA-9844594">
    <property type="pathway name" value="Transcriptional regulation of brown and beige adipocyte differentiation by EBF2"/>
</dbReference>
<dbReference type="Reactome" id="R-HSA-9854907">
    <property type="pathway name" value="Regulation of MITF-M dependent genes involved in metabolism"/>
</dbReference>
<dbReference type="SignaLink" id="Q9UBK2"/>
<dbReference type="SIGNOR" id="Q9UBK2"/>
<dbReference type="BioGRID-ORCS" id="10891">
    <property type="hits" value="13 hits in 1154 CRISPR screens"/>
</dbReference>
<dbReference type="ChiTaRS" id="PPARGC1A">
    <property type="organism name" value="human"/>
</dbReference>
<dbReference type="EvolutionaryTrace" id="Q9UBK2"/>
<dbReference type="GeneWiki" id="PPARGC1A"/>
<dbReference type="GenomeRNAi" id="10891"/>
<dbReference type="Pharos" id="Q9UBK2">
    <property type="development level" value="Tbio"/>
</dbReference>
<dbReference type="PRO" id="PR:Q9UBK2"/>
<dbReference type="Proteomes" id="UP000005640">
    <property type="component" value="Chromosome 4"/>
</dbReference>
<dbReference type="RNAct" id="Q9UBK2">
    <property type="molecule type" value="protein"/>
</dbReference>
<dbReference type="Bgee" id="ENSG00000109819">
    <property type="expression patterns" value="Expressed in renal medulla and 178 other cell types or tissues"/>
</dbReference>
<dbReference type="ExpressionAtlas" id="Q9UBK2">
    <property type="expression patterns" value="baseline and differential"/>
</dbReference>
<dbReference type="GO" id="GO:0000785">
    <property type="term" value="C:chromatin"/>
    <property type="evidence" value="ECO:0000305"/>
    <property type="project" value="MGI"/>
</dbReference>
<dbReference type="GO" id="GO:0005829">
    <property type="term" value="C:cytosol"/>
    <property type="evidence" value="ECO:0000314"/>
    <property type="project" value="HPA"/>
</dbReference>
<dbReference type="GO" id="GO:0005654">
    <property type="term" value="C:nucleoplasm"/>
    <property type="evidence" value="ECO:0000314"/>
    <property type="project" value="HPA"/>
</dbReference>
<dbReference type="GO" id="GO:0005634">
    <property type="term" value="C:nucleus"/>
    <property type="evidence" value="ECO:0000314"/>
    <property type="project" value="UniProtKB"/>
</dbReference>
<dbReference type="GO" id="GO:0016605">
    <property type="term" value="C:PML body"/>
    <property type="evidence" value="ECO:0007669"/>
    <property type="project" value="UniProtKB-SubCell"/>
</dbReference>
<dbReference type="GO" id="GO:0031490">
    <property type="term" value="F:chromatin DNA binding"/>
    <property type="evidence" value="ECO:0000250"/>
    <property type="project" value="UniProtKB"/>
</dbReference>
<dbReference type="GO" id="GO:0003677">
    <property type="term" value="F:DNA binding"/>
    <property type="evidence" value="ECO:0000250"/>
    <property type="project" value="UniProtKB"/>
</dbReference>
<dbReference type="GO" id="GO:0140297">
    <property type="term" value="F:DNA-binding transcription factor binding"/>
    <property type="evidence" value="ECO:0000304"/>
    <property type="project" value="UniProtKB"/>
</dbReference>
<dbReference type="GO" id="GO:0106222">
    <property type="term" value="F:lncRNA binding"/>
    <property type="evidence" value="ECO:0007669"/>
    <property type="project" value="Ensembl"/>
</dbReference>
<dbReference type="GO" id="GO:0016922">
    <property type="term" value="F:nuclear receptor binding"/>
    <property type="evidence" value="ECO:0000353"/>
    <property type="project" value="UniProtKB"/>
</dbReference>
<dbReference type="GO" id="GO:0003723">
    <property type="term" value="F:RNA binding"/>
    <property type="evidence" value="ECO:0000304"/>
    <property type="project" value="UniProtKB"/>
</dbReference>
<dbReference type="GO" id="GO:0061629">
    <property type="term" value="F:RNA polymerase II-specific DNA-binding transcription factor binding"/>
    <property type="evidence" value="ECO:0000250"/>
    <property type="project" value="BHF-UCL"/>
</dbReference>
<dbReference type="GO" id="GO:0043565">
    <property type="term" value="F:sequence-specific DNA binding"/>
    <property type="evidence" value="ECO:0000314"/>
    <property type="project" value="UniProtKB"/>
</dbReference>
<dbReference type="GO" id="GO:0003713">
    <property type="term" value="F:transcription coactivator activity"/>
    <property type="evidence" value="ECO:0000314"/>
    <property type="project" value="UniProtKB"/>
</dbReference>
<dbReference type="GO" id="GO:0003712">
    <property type="term" value="F:transcription coregulator activity"/>
    <property type="evidence" value="ECO:0000250"/>
    <property type="project" value="BHF-UCL"/>
</dbReference>
<dbReference type="GO" id="GO:0031625">
    <property type="term" value="F:ubiquitin protein ligase binding"/>
    <property type="evidence" value="ECO:0000353"/>
    <property type="project" value="UniProtKB"/>
</dbReference>
<dbReference type="GO" id="GO:0060612">
    <property type="term" value="P:adipose tissue development"/>
    <property type="evidence" value="ECO:0007669"/>
    <property type="project" value="Ensembl"/>
</dbReference>
<dbReference type="GO" id="GO:0050873">
    <property type="term" value="P:brown fat cell differentiation"/>
    <property type="evidence" value="ECO:0000304"/>
    <property type="project" value="UniProtKB"/>
</dbReference>
<dbReference type="GO" id="GO:0045333">
    <property type="term" value="P:cellular respiration"/>
    <property type="evidence" value="ECO:0000304"/>
    <property type="project" value="UniProtKB"/>
</dbReference>
<dbReference type="GO" id="GO:0034599">
    <property type="term" value="P:cellular response to oxidative stress"/>
    <property type="evidence" value="ECO:0000250"/>
    <property type="project" value="UniProtKB"/>
</dbReference>
<dbReference type="GO" id="GO:0032922">
    <property type="term" value="P:circadian regulation of gene expression"/>
    <property type="evidence" value="ECO:0000250"/>
    <property type="project" value="UniProtKB"/>
</dbReference>
<dbReference type="GO" id="GO:0007586">
    <property type="term" value="P:digestion"/>
    <property type="evidence" value="ECO:0000304"/>
    <property type="project" value="UniProtKB"/>
</dbReference>
<dbReference type="GO" id="GO:0097009">
    <property type="term" value="P:energy homeostasis"/>
    <property type="evidence" value="ECO:0000250"/>
    <property type="project" value="UniProtKB"/>
</dbReference>
<dbReference type="GO" id="GO:0019395">
    <property type="term" value="P:fatty acid oxidation"/>
    <property type="evidence" value="ECO:0000303"/>
    <property type="project" value="UniProtKB"/>
</dbReference>
<dbReference type="GO" id="GO:0006094">
    <property type="term" value="P:gluconeogenesis"/>
    <property type="evidence" value="ECO:0000314"/>
    <property type="project" value="UniProtKB"/>
</dbReference>
<dbReference type="GO" id="GO:0001678">
    <property type="term" value="P:intracellular glucose homeostasis"/>
    <property type="evidence" value="ECO:0000303"/>
    <property type="project" value="UniProtKB"/>
</dbReference>
<dbReference type="GO" id="GO:0007005">
    <property type="term" value="P:mitochondrion organization"/>
    <property type="evidence" value="ECO:0000315"/>
    <property type="project" value="ParkinsonsUK-UCL"/>
</dbReference>
<dbReference type="GO" id="GO:0006397">
    <property type="term" value="P:mRNA processing"/>
    <property type="evidence" value="ECO:0000304"/>
    <property type="project" value="UniProtKB"/>
</dbReference>
<dbReference type="GO" id="GO:0043524">
    <property type="term" value="P:negative regulation of neuron apoptotic process"/>
    <property type="evidence" value="ECO:0000250"/>
    <property type="project" value="UniProtKB"/>
</dbReference>
<dbReference type="GO" id="GO:0048662">
    <property type="term" value="P:negative regulation of smooth muscle cell proliferation"/>
    <property type="evidence" value="ECO:0000315"/>
    <property type="project" value="BHF-UCL"/>
</dbReference>
<dbReference type="GO" id="GO:0051402">
    <property type="term" value="P:neuron apoptotic process"/>
    <property type="evidence" value="ECO:0007669"/>
    <property type="project" value="Ensembl"/>
</dbReference>
<dbReference type="GO" id="GO:0120162">
    <property type="term" value="P:positive regulation of cold-induced thermogenesis"/>
    <property type="evidence" value="ECO:0000250"/>
    <property type="project" value="YuBioLab"/>
</dbReference>
<dbReference type="GO" id="GO:0045893">
    <property type="term" value="P:positive regulation of DNA-templated transcription"/>
    <property type="evidence" value="ECO:0000314"/>
    <property type="project" value="BHF-UCL"/>
</dbReference>
<dbReference type="GO" id="GO:0046321">
    <property type="term" value="P:positive regulation of fatty acid oxidation"/>
    <property type="evidence" value="ECO:0000304"/>
    <property type="project" value="UniProtKB"/>
</dbReference>
<dbReference type="GO" id="GO:0010628">
    <property type="term" value="P:positive regulation of gene expression"/>
    <property type="evidence" value="ECO:0000314"/>
    <property type="project" value="ARUK-UCL"/>
</dbReference>
<dbReference type="GO" id="GO:0045722">
    <property type="term" value="P:positive regulation of gluconeogenesis"/>
    <property type="evidence" value="ECO:0000314"/>
    <property type="project" value="BHF-UCL"/>
</dbReference>
<dbReference type="GO" id="GO:0045944">
    <property type="term" value="P:positive regulation of transcription by RNA polymerase II"/>
    <property type="evidence" value="ECO:0000314"/>
    <property type="project" value="BHF-UCL"/>
</dbReference>
<dbReference type="GO" id="GO:0050821">
    <property type="term" value="P:protein stabilization"/>
    <property type="evidence" value="ECO:0000304"/>
    <property type="project" value="UniProtKB"/>
</dbReference>
<dbReference type="GO" id="GO:0065003">
    <property type="term" value="P:protein-containing complex assembly"/>
    <property type="evidence" value="ECO:0000304"/>
    <property type="project" value="UniProtKB"/>
</dbReference>
<dbReference type="GO" id="GO:0042752">
    <property type="term" value="P:regulation of circadian rhythm"/>
    <property type="evidence" value="ECO:0000250"/>
    <property type="project" value="UniProtKB"/>
</dbReference>
<dbReference type="GO" id="GO:0006355">
    <property type="term" value="P:regulation of DNA-templated transcription"/>
    <property type="evidence" value="ECO:0000314"/>
    <property type="project" value="UniProtKB"/>
</dbReference>
<dbReference type="GO" id="GO:0022904">
    <property type="term" value="P:respiratory electron transport chain"/>
    <property type="evidence" value="ECO:0000250"/>
    <property type="project" value="UniProtKB"/>
</dbReference>
<dbReference type="GO" id="GO:0002021">
    <property type="term" value="P:response to dietary excess"/>
    <property type="evidence" value="ECO:0007669"/>
    <property type="project" value="Ensembl"/>
</dbReference>
<dbReference type="GO" id="GO:0014850">
    <property type="term" value="P:response to muscle activity"/>
    <property type="evidence" value="ECO:0000250"/>
    <property type="project" value="BHF-UCL"/>
</dbReference>
<dbReference type="GO" id="GO:0042594">
    <property type="term" value="P:response to starvation"/>
    <property type="evidence" value="ECO:0000303"/>
    <property type="project" value="UniProtKB"/>
</dbReference>
<dbReference type="GO" id="GO:0008380">
    <property type="term" value="P:RNA splicing"/>
    <property type="evidence" value="ECO:0000304"/>
    <property type="project" value="UniProtKB"/>
</dbReference>
<dbReference type="GO" id="GO:0001659">
    <property type="term" value="P:temperature homeostasis"/>
    <property type="evidence" value="ECO:0000304"/>
    <property type="project" value="UniProtKB"/>
</dbReference>
<dbReference type="GO" id="GO:0006367">
    <property type="term" value="P:transcription initiation at RNA polymerase II promoter"/>
    <property type="evidence" value="ECO:0000304"/>
    <property type="project" value="UniProtKB"/>
</dbReference>
<dbReference type="CDD" id="cd12623">
    <property type="entry name" value="RRM_PPARGC1A"/>
    <property type="match status" value="1"/>
</dbReference>
<dbReference type="DisProt" id="DP01489"/>
<dbReference type="FunFam" id="3.30.70.330:FF:000184">
    <property type="entry name" value="Peroxisome proliferator-activated receptor gamma coactivator 1-alpha"/>
    <property type="match status" value="1"/>
</dbReference>
<dbReference type="Gene3D" id="3.30.70.330">
    <property type="match status" value="1"/>
</dbReference>
<dbReference type="IDEAL" id="IID00103"/>
<dbReference type="InterPro" id="IPR012677">
    <property type="entry name" value="Nucleotide-bd_a/b_plait_sf"/>
</dbReference>
<dbReference type="InterPro" id="IPR034605">
    <property type="entry name" value="PGC-1"/>
</dbReference>
<dbReference type="InterPro" id="IPR034833">
    <property type="entry name" value="PPARGC1A_RRM"/>
</dbReference>
<dbReference type="InterPro" id="IPR035979">
    <property type="entry name" value="RBD_domain_sf"/>
</dbReference>
<dbReference type="InterPro" id="IPR000504">
    <property type="entry name" value="RRM_dom"/>
</dbReference>
<dbReference type="PANTHER" id="PTHR15528">
    <property type="entry name" value="PEROXISOME PROLIFERATOR ACTIVATED RECEPTOR GAMMA COACTIVATOR 1 PGC-1 -RELATED"/>
    <property type="match status" value="1"/>
</dbReference>
<dbReference type="PANTHER" id="PTHR15528:SF10">
    <property type="entry name" value="PEROXISOME PROLIFERATOR-ACTIVATED RECEPTOR GAMMA COACTIVATOR 1-ALPHA"/>
    <property type="match status" value="1"/>
</dbReference>
<dbReference type="Pfam" id="PF00076">
    <property type="entry name" value="RRM_1"/>
    <property type="match status" value="1"/>
</dbReference>
<dbReference type="SMART" id="SM00360">
    <property type="entry name" value="RRM"/>
    <property type="match status" value="1"/>
</dbReference>
<dbReference type="SUPFAM" id="SSF54928">
    <property type="entry name" value="RNA-binding domain, RBD"/>
    <property type="match status" value="1"/>
</dbReference>
<dbReference type="PROSITE" id="PS50102">
    <property type="entry name" value="RRM"/>
    <property type="match status" value="1"/>
</dbReference>
<feature type="chain" id="PRO_0000081732" description="Peroxisome proliferator-activated receptor gamma coactivator 1-alpha">
    <location>
        <begin position="1"/>
        <end position="798"/>
    </location>
</feature>
<feature type="domain" description="RRM" evidence="2">
    <location>
        <begin position="677"/>
        <end position="753"/>
    </location>
</feature>
<feature type="region of interest" description="Disordered" evidence="3">
    <location>
        <begin position="100"/>
        <end position="140"/>
    </location>
</feature>
<feature type="region of interest" description="Disordered" evidence="3">
    <location>
        <begin position="213"/>
        <end position="277"/>
    </location>
</feature>
<feature type="region of interest" description="Disordered" evidence="3">
    <location>
        <begin position="290"/>
        <end position="351"/>
    </location>
</feature>
<feature type="region of interest" description="Interaction with PPARG" evidence="6">
    <location>
        <begin position="293"/>
        <end position="339"/>
    </location>
</feature>
<feature type="region of interest" description="Mediates interaction with RNF34" evidence="12">
    <location>
        <begin position="350"/>
        <end position="798"/>
    </location>
</feature>
<feature type="region of interest" description="Disordered" evidence="3">
    <location>
        <begin position="542"/>
        <end position="599"/>
    </location>
</feature>
<feature type="region of interest" description="Disordered" evidence="3">
    <location>
        <begin position="613"/>
        <end position="639"/>
    </location>
</feature>
<feature type="region of interest" description="Disordered" evidence="3">
    <location>
        <begin position="650"/>
        <end position="669"/>
    </location>
</feature>
<feature type="short sequence motif" description="LXXLL motif" evidence="1">
    <location>
        <begin position="144"/>
        <end position="148"/>
    </location>
</feature>
<feature type="compositionally biased region" description="Polar residues" evidence="3">
    <location>
        <begin position="116"/>
        <end position="129"/>
    </location>
</feature>
<feature type="compositionally biased region" description="Basic and acidic residues" evidence="3">
    <location>
        <begin position="219"/>
        <end position="237"/>
    </location>
</feature>
<feature type="compositionally biased region" description="Polar residues" evidence="3">
    <location>
        <begin position="334"/>
        <end position="346"/>
    </location>
</feature>
<feature type="compositionally biased region" description="Basic residues" evidence="3">
    <location>
        <begin position="563"/>
        <end position="578"/>
    </location>
</feature>
<feature type="compositionally biased region" description="Low complexity" evidence="3">
    <location>
        <begin position="579"/>
        <end position="599"/>
    </location>
</feature>
<feature type="compositionally biased region" description="Basic residues" evidence="3">
    <location>
        <begin position="622"/>
        <end position="631"/>
    </location>
</feature>
<feature type="modified residue" description="N6-acetyllysine" evidence="1">
    <location>
        <position position="79"/>
    </location>
</feature>
<feature type="modified residue" description="N6-acetyllysine" evidence="1">
    <location>
        <position position="146"/>
    </location>
</feature>
<feature type="modified residue" description="Phosphothreonine; by AMPK" evidence="1">
    <location>
        <position position="178"/>
    </location>
</feature>
<feature type="modified residue" description="N6-acetyllysine" evidence="1">
    <location>
        <position position="184"/>
    </location>
</feature>
<feature type="modified residue" description="N6-acetyllysine" evidence="1">
    <location>
        <position position="254"/>
    </location>
</feature>
<feature type="modified residue" description="N6-acetyllysine" evidence="1">
    <location>
        <position position="271"/>
    </location>
</feature>
<feature type="modified residue" description="N6-acetyllysine" evidence="1">
    <location>
        <position position="278"/>
    </location>
</feature>
<feature type="modified residue" description="N6-acetyllysine" evidence="1">
    <location>
        <position position="321"/>
    </location>
</feature>
<feature type="modified residue" description="N6-acetyllysine" evidence="1">
    <location>
        <position position="347"/>
    </location>
</feature>
<feature type="modified residue" description="N6-acetyllysine" evidence="1">
    <location>
        <position position="413"/>
    </location>
</feature>
<feature type="modified residue" description="N6-acetyllysine" evidence="1">
    <location>
        <position position="442"/>
    </location>
</feature>
<feature type="modified residue" description="N6-acetyllysine" evidence="1">
    <location>
        <position position="451"/>
    </location>
</feature>
<feature type="modified residue" description="Phosphoserine; by AMPK" evidence="1">
    <location>
        <position position="539"/>
    </location>
</feature>
<feature type="modified residue" description="N6-acetyllysine" evidence="1">
    <location>
        <position position="758"/>
    </location>
</feature>
<feature type="modified residue" description="N6-acetyllysine" evidence="1">
    <location>
        <position position="779"/>
    </location>
</feature>
<feature type="splice variant" id="VSP_053770" description="In isoform 9." evidence="21">
    <location>
        <begin position="1"/>
        <end position="127"/>
    </location>
</feature>
<feature type="splice variant" id="VSP_053725" description="In isoform B4, isoform B4-8a and isoform B4-3ext." evidence="22">
    <original>MAWDMCNQDSESVWSDIE</original>
    <variation>MDEGYF</variation>
    <location>
        <begin position="1"/>
        <end position="18"/>
    </location>
</feature>
<feature type="splice variant" id="VSP_053724" description="In isoform B5 and isoform B5-NT." evidence="22">
    <original>MAWDMCNQDSESVWSDIE</original>
    <variation>MDETSPRLEEDWKKVLQREAGWQ</variation>
    <location>
        <begin position="1"/>
        <end position="18"/>
    </location>
</feature>
<feature type="splice variant" id="VSP_053726" description="In isoform B4-3ext." evidence="22">
    <original>LKKLLLA</original>
    <variation>VRTLPTV</variation>
    <location>
        <begin position="144"/>
        <end position="150"/>
    </location>
</feature>
<feature type="splice variant" id="VSP_053727" description="In isoform B4-3ext." evidence="22">
    <location>
        <begin position="151"/>
        <end position="798"/>
    </location>
</feature>
<feature type="splice variant" id="VSP_047684" description="In isoform NT-7a and isoform B5-NT." evidence="22 23">
    <original>DPK</original>
    <variation>LFL</variation>
    <location>
        <begin position="269"/>
        <end position="271"/>
    </location>
</feature>
<feature type="splice variant" id="VSP_047685" description="In isoform NT-7a and isoform B5-NT." evidence="22 23">
    <location>
        <begin position="272"/>
        <end position="798"/>
    </location>
</feature>
<feature type="splice variant" id="VSP_053728" description="In isoform B4-8a and isoform 8a." evidence="19 22">
    <original>LTPPTTPP</original>
    <variation>VKTNLISK</variation>
    <location>
        <begin position="294"/>
        <end position="301"/>
    </location>
</feature>
<feature type="splice variant" id="VSP_053729" description="In isoform B4-8a and isoform 8a." evidence="19 22">
    <location>
        <begin position="302"/>
        <end position="798"/>
    </location>
</feature>
<feature type="sequence variant" id="VAR_018450" description="In dbSNP:rs8192678." evidence="5">
    <original>G</original>
    <variation>S</variation>
    <location>
        <position position="482"/>
    </location>
</feature>
<feature type="sequence variant" id="VAR_018451" description="In dbSNP:rs3736265.">
    <original>T</original>
    <variation>M</variation>
    <location>
        <position position="612"/>
    </location>
</feature>
<feature type="helix" evidence="27">
    <location>
        <begin position="143"/>
        <end position="149"/>
    </location>
</feature>
<feature type="helix" evidence="26">
    <location>
        <begin position="208"/>
        <end position="214"/>
    </location>
</feature>
<organism>
    <name type="scientific">Homo sapiens</name>
    <name type="common">Human</name>
    <dbReference type="NCBI Taxonomy" id="9606"/>
    <lineage>
        <taxon>Eukaryota</taxon>
        <taxon>Metazoa</taxon>
        <taxon>Chordata</taxon>
        <taxon>Craniata</taxon>
        <taxon>Vertebrata</taxon>
        <taxon>Euteleostomi</taxon>
        <taxon>Mammalia</taxon>
        <taxon>Eutheria</taxon>
        <taxon>Euarchontoglires</taxon>
        <taxon>Primates</taxon>
        <taxon>Haplorrhini</taxon>
        <taxon>Catarrhini</taxon>
        <taxon>Hominidae</taxon>
        <taxon>Homo</taxon>
    </lineage>
</organism>
<protein>
    <recommendedName>
        <fullName>Peroxisome proliferator-activated receptor gamma coactivator 1-alpha</fullName>
        <shortName evidence="20">PGC-1-alpha</shortName>
        <shortName evidence="18">PPAR-gamma coactivator 1-alpha</shortName>
        <shortName evidence="18">PPARGC-1-alpha</shortName>
    </recommendedName>
    <alternativeName>
        <fullName>Ligand effect modulator 6</fullName>
    </alternativeName>
</protein>
<name>PRGC1_HUMAN</name>
<comment type="function">
    <text evidence="1 6 7 9 10 14 15 16 17">Transcriptional coactivator for steroid receptors and nuclear receptors (PubMed:10713165, PubMed:20005308, PubMed:21376232, PubMed:28363985, PubMed:32433991). Greatly increases the transcriptional activity of PPARG and thyroid hormone receptor on the uncoupling protein promoter (PubMed:10713165, PubMed:20005308, PubMed:21376232). Can regulate key mitochondrial genes that contribute to the program of adaptive thermogenesis (PubMed:10713165, PubMed:20005308, PubMed:21376232). Plays an essential role in metabolic reprogramming in response to dietary availability through coordination of the expression of a wide array of genes involved in glucose and fatty acid metabolism (PubMed:10713165, PubMed:20005308, PubMed:21376232). Acts as a key regulator of gluconeogenesis: stimulates hepatic gluconeogenesis by increasing the expression of gluconeogenic enzymes, and acting together with FOXO1 to promote the fasting gluconeogenic program (PubMed:16753578, PubMed:23142079). Induces the expression of PERM1 in the skeletal muscle in an ESRRA-dependent manner (PubMed:23836911). Also involved in the integration of the circadian rhythms and energy metabolism (By similarity). Required for oscillatory expression of clock genes, such as BMAL1 and NR1D1, through the coactivation of RORA and RORC, and metabolic genes, such as PDK4 and PEPCK (By similarity).</text>
</comment>
<comment type="subunit">
    <text evidence="1 6 8 16 17">Homooligomer (PubMed:10713165). Interacts with MYBBP1A; inhibits MYBBP1A transcriptional activation (By similarity). Interacts with PRDM16, LPIN1 and PML (By similarity). Interacts (via LXXLL motif) with RORA and RORC (via AF-2 motif); activates RORA and RORC transcriptional activation (By similarity). Interacts with LRPPRC (PubMed:17050673). Interacts with FOXO1 (By similarity). Interacts with NR5A2 (PubMed:28363985, PubMed:32433991).</text>
</comment>
<comment type="interaction">
    <interactant intactId="EBI-765486">
        <id>Q9UBK2</id>
    </interactant>
    <interactant intactId="EBI-372412">
        <id>P11474</id>
        <label>ESRRA</label>
    </interactant>
    <organismsDiffer>false</organismsDiffer>
    <experiments>20</experiments>
</comment>
<comment type="interaction">
    <interactant intactId="EBI-765486">
        <id>Q9UBK2</id>
    </interactant>
    <interactant intactId="EBI-2834260">
        <id>P62508</id>
        <label>ESRRG</label>
    </interactant>
    <organismsDiffer>false</organismsDiffer>
    <experiments>4</experiments>
</comment>
<comment type="interaction">
    <interactant intactId="EBI-765486">
        <id>Q9UBK2</id>
    </interactant>
    <interactant intactId="EBI-12001340">
        <id>P62508-3</id>
        <label>ESRRG</label>
    </interactant>
    <organismsDiffer>false</organismsDiffer>
    <experiments>5</experiments>
</comment>
<comment type="interaction">
    <interactant intactId="EBI-765486">
        <id>Q9UBK2</id>
    </interactant>
    <interactant intactId="EBI-1049011">
        <id>P41235</id>
        <label>HNF4A</label>
    </interactant>
    <organismsDiffer>false</organismsDiffer>
    <experiments>4</experiments>
</comment>
<comment type="interaction">
    <interactant intactId="EBI-765486">
        <id>Q9UBK2</id>
    </interactant>
    <interactant intactId="EBI-1050853">
        <id>P42704</id>
        <label>LRPPRC</label>
    </interactant>
    <organismsDiffer>false</organismsDiffer>
    <experiments>2</experiments>
</comment>
<comment type="interaction">
    <interactant intactId="EBI-765486">
        <id>Q9UBK2</id>
    </interactant>
    <interactant intactId="EBI-781384">
        <id>P37231</id>
        <label>PPARG</label>
    </interactant>
    <organismsDiffer>false</organismsDiffer>
    <experiments>2</experiments>
</comment>
<comment type="interaction">
    <interactant intactId="EBI-765486">
        <id>Q9UBK2</id>
    </interactant>
    <interactant intactId="EBI-8583223">
        <id>P10826-2</id>
        <label>RARB</label>
    </interactant>
    <organismsDiffer>false</organismsDiffer>
    <experiments>3</experiments>
</comment>
<comment type="subcellular location">
    <molecule>Isoform 1</molecule>
    <subcellularLocation>
        <location evidence="6">Nucleus</location>
    </subcellularLocation>
    <subcellularLocation>
        <location evidence="1">Nucleus</location>
        <location evidence="1">PML body</location>
    </subcellularLocation>
</comment>
<comment type="subcellular location">
    <molecule>Isoform B4</molecule>
    <subcellularLocation>
        <location evidence="13">Nucleus</location>
    </subcellularLocation>
</comment>
<comment type="subcellular location">
    <molecule>Isoform B4-8a</molecule>
    <subcellularLocation>
        <location evidence="13">Cytoplasm</location>
    </subcellularLocation>
    <subcellularLocation>
        <location evidence="13">Nucleus</location>
    </subcellularLocation>
</comment>
<comment type="subcellular location">
    <molecule>Isoform B5</molecule>
    <subcellularLocation>
        <location evidence="13">Nucleus</location>
    </subcellularLocation>
    <subcellularLocation>
        <location evidence="13">Nucleus</location>
        <location evidence="13">PML body</location>
    </subcellularLocation>
</comment>
<comment type="subcellular location">
    <molecule>Isoform 9</molecule>
    <subcellularLocation>
        <location evidence="11">Nucleus</location>
    </subcellularLocation>
</comment>
<comment type="alternative products">
    <event type="alternative promoter"/>
    <event type="alternative splicing"/>
    <isoform>
        <id>Q9UBK2-1</id>
        <name>1</name>
        <sequence type="displayed"/>
    </isoform>
    <isoform>
        <id>Q9UBK2-2</id>
        <name>NT-7a</name>
        <sequence type="described" ref="VSP_047684 VSP_047685"/>
    </isoform>
    <isoform>
        <id>Q9UBK2-3</id>
        <name>B5</name>
        <sequence type="described" ref="VSP_053724"/>
    </isoform>
    <isoform>
        <id>Q9UBK2-4</id>
        <name>B4</name>
        <sequence type="described" ref="VSP_053725"/>
    </isoform>
    <isoform>
        <id>Q9UBK2-5</id>
        <name>B4-8a</name>
        <sequence type="described" ref="VSP_053725 VSP_053728 VSP_053729"/>
    </isoform>
    <isoform>
        <id>Q9UBK2-6</id>
        <name>B5-NT</name>
        <sequence type="described" ref="VSP_053724 VSP_047684 VSP_047685"/>
    </isoform>
    <isoform>
        <id>Q9UBK2-7</id>
        <name>B4-3ext</name>
        <sequence type="described" ref="VSP_053725 VSP_053726 VSP_053727"/>
    </isoform>
    <isoform>
        <id>Q9UBK2-8</id>
        <name>8a</name>
        <sequence type="described" ref="VSP_053728 VSP_053729"/>
    </isoform>
    <isoform>
        <id>Q9UBK2-9</id>
        <name>9</name>
        <name>L-PGG-1alpha</name>
        <sequence type="described" ref="VSP_053770"/>
    </isoform>
</comment>
<comment type="tissue specificity">
    <text evidence="4 5 6">Heart, skeletal muscle, liver and kidney. Expressed at lower levels in brain and pancreas and at very low levels in the intestine and white adipose tissue. In skeletal muscle, levels were lower in obese than in lean subjects and fasting induced a 2-fold increase in levels in the skeletal muscle in obese subjects.</text>
</comment>
<comment type="induction">
    <text evidence="10">Transcription is repressed by ZNF746 which binds to 'insulin response sequences' its promoter.</text>
</comment>
<comment type="PTM">
    <text evidence="1">Phosphorylation by AMPK in skeletal muscle increases activation of its own promoter. Phosphorylated by CLK2.</text>
</comment>
<comment type="PTM">
    <text evidence="7 9 14">Heavily acetylated by KAT2A/GCN5 under conditions of high nutrients, leading to inactivation of PPARGC1A (PubMed:16753578, PubMed:20005308, PubMed:23142079). Deacetylated by SIRT1 in low nutrients/high NAD conditions, leading to its activation (PubMed:20005308).</text>
</comment>
<comment type="PTM">
    <text evidence="12">Ubiquitinated. Ubiquitination by RNF34 induces proteasomal degradation.</text>
</comment>
<comment type="miscellaneous">
    <molecule>Isoform B5</molecule>
    <text evidence="24">Produced by alternative promoter usage.</text>
</comment>
<comment type="miscellaneous">
    <molecule>Isoform B4</molecule>
    <text evidence="24">Produced by alternative promoter usage.</text>
</comment>
<comment type="miscellaneous">
    <molecule>Isoform B4-8a</molecule>
    <text evidence="24">Produced by alternative promoter usage.</text>
</comment>
<comment type="miscellaneous">
    <molecule>Isoform B5-NT</molecule>
    <text evidence="24">Produced by alternative promoter usage.</text>
</comment>
<comment type="miscellaneous">
    <molecule>Isoform B4-3ext</molecule>
    <text evidence="24">Produced by alternative promoter usage.</text>
</comment>
<comment type="miscellaneous">
    <molecule>Isoform 9</molecule>
    <text evidence="24">Produced by alternative promoter usage. May be involved in gluconeogenesis, liver-specific.</text>
</comment>
<reference key="1">
    <citation type="journal article" date="1999" name="Genomics">
        <title>Human peroxisome proliferator activated receptor gamma coactivator 1 (PPARGC1) gene: cDNA sequence, genomic organization, chromosomal localization, and tissue expression.</title>
        <authorList>
            <person name="Esterbauer H."/>
            <person name="Oberkofler H."/>
            <person name="Krempler F."/>
            <person name="Patsch W."/>
        </authorList>
    </citation>
    <scope>NUCLEOTIDE SEQUENCE [GENOMIC DNA / MRNA] (ISOFORM 1)</scope>
    <scope>TISSUE SPECIFICITY</scope>
</reference>
<reference key="2">
    <citation type="journal article" date="1999" name="Int. J. Obes. Relat. Metab. Disord.">
        <title>Cloning and mRNA tissue distribution of human PPARgamma coactivator-1.</title>
        <authorList>
            <person name="Larrouy D."/>
            <person name="Vidal H."/>
            <person name="Andreelli F."/>
            <person name="Laville M."/>
            <person name="Langin D."/>
        </authorList>
    </citation>
    <scope>NUCLEOTIDE SEQUENCE [MRNA] (ISOFORM 1)</scope>
    <scope>TISSUE SPECIFICITY</scope>
    <scope>VARIANT SER-482</scope>
    <source>
        <tissue>Skeletal muscle</tissue>
    </source>
</reference>
<reference key="3">
    <citation type="journal article" date="2000" name="Mol. Cell. Biol.">
        <title>A tissue-specific coactivator of steroid receptors, identified in a functional genetic screen.</title>
        <authorList>
            <person name="Knutti D."/>
            <person name="Kaul A."/>
            <person name="Kralli A."/>
        </authorList>
    </citation>
    <scope>NUCLEOTIDE SEQUENCE [MRNA] (ISOFORM 1)</scope>
    <scope>FUNCTION</scope>
    <scope>SUBUNIT</scope>
    <scope>SUBCELLULAR LOCATION</scope>
    <scope>TISSUE SPECIFICITY</scope>
</reference>
<reference key="4">
    <citation type="journal article" date="2011" name="J. Biol. Chem.">
        <title>Characterization of novel peroxisome proliferator-activated receptor gamma coactivator-1alpha (PGC-1alpha) isoform in human liver.</title>
        <authorList>
            <person name="Felder T.K."/>
            <person name="Soyal S.M."/>
            <person name="Oberkofler H."/>
            <person name="Hahne P."/>
            <person name="Auer S."/>
            <person name="Weiss R."/>
            <person name="Gadermaier G."/>
            <person name="Miller K."/>
            <person name="Krempler F."/>
            <person name="Esterbauer H."/>
            <person name="Patsch W."/>
        </authorList>
    </citation>
    <scope>NUCLEOTIDE SEQUENCE [MRNA] (ISOFORM 9)</scope>
    <scope>SUBCELLULAR LOCATION (ISOFORM 9)</scope>
    <source>
        <tissue>Liver</tissue>
    </source>
</reference>
<reference key="5">
    <citation type="journal article" date="2012" name="Hum. Mol. Genet.">
        <title>A greatly extended PPARGC1A genomic locus encodes several new brain-specific isoforms and influences Huntington disease age of onset.</title>
        <authorList>
            <person name="Soyal S.M."/>
            <person name="Felder T.K."/>
            <person name="Auer S."/>
            <person name="Hahne P."/>
            <person name="Oberkofler H."/>
            <person name="Witting A."/>
            <person name="Paulmichl M."/>
            <person name="Landwehrmeyer G.B."/>
            <person name="Weydt P."/>
            <person name="Patsch W."/>
        </authorList>
    </citation>
    <scope>NUCLEOTIDE SEQUENCE [MRNA] (ISOFORMS B4; B4-3EXT; B4-8A; B5 AND B5-NT)</scope>
    <scope>ALTERNATIVE PROMOTER USAGE</scope>
    <scope>ALTERNATIVE SPLICING</scope>
    <scope>SUBCELLULAR LOCATION</scope>
    <source>
        <tissue>Brain</tissue>
    </source>
</reference>
<reference key="6">
    <citation type="submission" date="2001-05" db="EMBL/GenBank/DDBJ databases">
        <title>Isoform of PGC-1 generated by alternative splicing.</title>
        <authorList>
            <person name="Endo H."/>
        </authorList>
    </citation>
    <scope>NUCLEOTIDE SEQUENCE [MRNA] (ISOFORM NT-7A)</scope>
    <scope>ALTERNATIVE SPLICING</scope>
    <source>
        <tissue>Skeletal muscle</tissue>
    </source>
</reference>
<reference key="7">
    <citation type="journal article" date="2004" name="Nat. Genet.">
        <title>Complete sequencing and characterization of 21,243 full-length human cDNAs.</title>
        <authorList>
            <person name="Ota T."/>
            <person name="Suzuki Y."/>
            <person name="Nishikawa T."/>
            <person name="Otsuki T."/>
            <person name="Sugiyama T."/>
            <person name="Irie R."/>
            <person name="Wakamatsu A."/>
            <person name="Hayashi K."/>
            <person name="Sato H."/>
            <person name="Nagai K."/>
            <person name="Kimura K."/>
            <person name="Makita H."/>
            <person name="Sekine M."/>
            <person name="Obayashi M."/>
            <person name="Nishi T."/>
            <person name="Shibahara T."/>
            <person name="Tanaka T."/>
            <person name="Ishii S."/>
            <person name="Yamamoto J."/>
            <person name="Saito K."/>
            <person name="Kawai Y."/>
            <person name="Isono Y."/>
            <person name="Nakamura Y."/>
            <person name="Nagahari K."/>
            <person name="Murakami K."/>
            <person name="Yasuda T."/>
            <person name="Iwayanagi T."/>
            <person name="Wagatsuma M."/>
            <person name="Shiratori A."/>
            <person name="Sudo H."/>
            <person name="Hosoiri T."/>
            <person name="Kaku Y."/>
            <person name="Kodaira H."/>
            <person name="Kondo H."/>
            <person name="Sugawara M."/>
            <person name="Takahashi M."/>
            <person name="Kanda K."/>
            <person name="Yokoi T."/>
            <person name="Furuya T."/>
            <person name="Kikkawa E."/>
            <person name="Omura Y."/>
            <person name="Abe K."/>
            <person name="Kamihara K."/>
            <person name="Katsuta N."/>
            <person name="Sato K."/>
            <person name="Tanikawa M."/>
            <person name="Yamazaki M."/>
            <person name="Ninomiya K."/>
            <person name="Ishibashi T."/>
            <person name="Yamashita H."/>
            <person name="Murakawa K."/>
            <person name="Fujimori K."/>
            <person name="Tanai H."/>
            <person name="Kimata M."/>
            <person name="Watanabe M."/>
            <person name="Hiraoka S."/>
            <person name="Chiba Y."/>
            <person name="Ishida S."/>
            <person name="Ono Y."/>
            <person name="Takiguchi S."/>
            <person name="Watanabe S."/>
            <person name="Yosida M."/>
            <person name="Hotuta T."/>
            <person name="Kusano J."/>
            <person name="Kanehori K."/>
            <person name="Takahashi-Fujii A."/>
            <person name="Hara H."/>
            <person name="Tanase T.-O."/>
            <person name="Nomura Y."/>
            <person name="Togiya S."/>
            <person name="Komai F."/>
            <person name="Hara R."/>
            <person name="Takeuchi K."/>
            <person name="Arita M."/>
            <person name="Imose N."/>
            <person name="Musashino K."/>
            <person name="Yuuki H."/>
            <person name="Oshima A."/>
            <person name="Sasaki N."/>
            <person name="Aotsuka S."/>
            <person name="Yoshikawa Y."/>
            <person name="Matsunawa H."/>
            <person name="Ichihara T."/>
            <person name="Shiohata N."/>
            <person name="Sano S."/>
            <person name="Moriya S."/>
            <person name="Momiyama H."/>
            <person name="Satoh N."/>
            <person name="Takami S."/>
            <person name="Terashima Y."/>
            <person name="Suzuki O."/>
            <person name="Nakagawa S."/>
            <person name="Senoh A."/>
            <person name="Mizoguchi H."/>
            <person name="Goto Y."/>
            <person name="Shimizu F."/>
            <person name="Wakebe H."/>
            <person name="Hishigaki H."/>
            <person name="Watanabe T."/>
            <person name="Sugiyama A."/>
            <person name="Takemoto M."/>
            <person name="Kawakami B."/>
            <person name="Yamazaki M."/>
            <person name="Watanabe K."/>
            <person name="Kumagai A."/>
            <person name="Itakura S."/>
            <person name="Fukuzumi Y."/>
            <person name="Fujimori Y."/>
            <person name="Komiyama M."/>
            <person name="Tashiro H."/>
            <person name="Tanigami A."/>
            <person name="Fujiwara T."/>
            <person name="Ono T."/>
            <person name="Yamada K."/>
            <person name="Fujii Y."/>
            <person name="Ozaki K."/>
            <person name="Hirao M."/>
            <person name="Ohmori Y."/>
            <person name="Kawabata A."/>
            <person name="Hikiji T."/>
            <person name="Kobatake N."/>
            <person name="Inagaki H."/>
            <person name="Ikema Y."/>
            <person name="Okamoto S."/>
            <person name="Okitani R."/>
            <person name="Kawakami T."/>
            <person name="Noguchi S."/>
            <person name="Itoh T."/>
            <person name="Shigeta K."/>
            <person name="Senba T."/>
            <person name="Matsumura K."/>
            <person name="Nakajima Y."/>
            <person name="Mizuno T."/>
            <person name="Morinaga M."/>
            <person name="Sasaki M."/>
            <person name="Togashi T."/>
            <person name="Oyama M."/>
            <person name="Hata H."/>
            <person name="Watanabe M."/>
            <person name="Komatsu T."/>
            <person name="Mizushima-Sugano J."/>
            <person name="Satoh T."/>
            <person name="Shirai Y."/>
            <person name="Takahashi Y."/>
            <person name="Nakagawa K."/>
            <person name="Okumura K."/>
            <person name="Nagase T."/>
            <person name="Nomura N."/>
            <person name="Kikuchi H."/>
            <person name="Masuho Y."/>
            <person name="Yamashita R."/>
            <person name="Nakai K."/>
            <person name="Yada T."/>
            <person name="Nakamura Y."/>
            <person name="Ohara O."/>
            <person name="Isogai T."/>
            <person name="Sugano S."/>
        </authorList>
    </citation>
    <scope>NUCLEOTIDE SEQUENCE [LARGE SCALE MRNA] (ISOFORM 8A)</scope>
</reference>
<reference key="8">
    <citation type="submission" date="2007-11" db="EMBL/GenBank/DDBJ databases">
        <authorList>
            <person name="Rieder M.J."/>
            <person name="Johanson E.J."/>
            <person name="da Ponte S.H."/>
            <person name="Stanaway I.B."/>
            <person name="Ahearn M.O."/>
            <person name="Bertucci C.B."/>
            <person name="Wong M.W."/>
            <person name="Yi Q."/>
            <person name="Nickerson D.A."/>
        </authorList>
    </citation>
    <scope>NUCLEOTIDE SEQUENCE [GENOMIC DNA]</scope>
</reference>
<reference key="9">
    <citation type="journal article" date="2005" name="Nature">
        <title>Generation and annotation of the DNA sequences of human chromosomes 2 and 4.</title>
        <authorList>
            <person name="Hillier L.W."/>
            <person name="Graves T.A."/>
            <person name="Fulton R.S."/>
            <person name="Fulton L.A."/>
            <person name="Pepin K.H."/>
            <person name="Minx P."/>
            <person name="Wagner-McPherson C."/>
            <person name="Layman D."/>
            <person name="Wylie K."/>
            <person name="Sekhon M."/>
            <person name="Becker M.C."/>
            <person name="Fewell G.A."/>
            <person name="Delehaunty K.D."/>
            <person name="Miner T.L."/>
            <person name="Nash W.E."/>
            <person name="Kremitzki C."/>
            <person name="Oddy L."/>
            <person name="Du H."/>
            <person name="Sun H."/>
            <person name="Bradshaw-Cordum H."/>
            <person name="Ali J."/>
            <person name="Carter J."/>
            <person name="Cordes M."/>
            <person name="Harris A."/>
            <person name="Isak A."/>
            <person name="van Brunt A."/>
            <person name="Nguyen C."/>
            <person name="Du F."/>
            <person name="Courtney L."/>
            <person name="Kalicki J."/>
            <person name="Ozersky P."/>
            <person name="Abbott S."/>
            <person name="Armstrong J."/>
            <person name="Belter E.A."/>
            <person name="Caruso L."/>
            <person name="Cedroni M."/>
            <person name="Cotton M."/>
            <person name="Davidson T."/>
            <person name="Desai A."/>
            <person name="Elliott G."/>
            <person name="Erb T."/>
            <person name="Fronick C."/>
            <person name="Gaige T."/>
            <person name="Haakenson W."/>
            <person name="Haglund K."/>
            <person name="Holmes A."/>
            <person name="Harkins R."/>
            <person name="Kim K."/>
            <person name="Kruchowski S.S."/>
            <person name="Strong C.M."/>
            <person name="Grewal N."/>
            <person name="Goyea E."/>
            <person name="Hou S."/>
            <person name="Levy A."/>
            <person name="Martinka S."/>
            <person name="Mead K."/>
            <person name="McLellan M.D."/>
            <person name="Meyer R."/>
            <person name="Randall-Maher J."/>
            <person name="Tomlinson C."/>
            <person name="Dauphin-Kohlberg S."/>
            <person name="Kozlowicz-Reilly A."/>
            <person name="Shah N."/>
            <person name="Swearengen-Shahid S."/>
            <person name="Snider J."/>
            <person name="Strong J.T."/>
            <person name="Thompson J."/>
            <person name="Yoakum M."/>
            <person name="Leonard S."/>
            <person name="Pearman C."/>
            <person name="Trani L."/>
            <person name="Radionenko M."/>
            <person name="Waligorski J.E."/>
            <person name="Wang C."/>
            <person name="Rock S.M."/>
            <person name="Tin-Wollam A.-M."/>
            <person name="Maupin R."/>
            <person name="Latreille P."/>
            <person name="Wendl M.C."/>
            <person name="Yang S.-P."/>
            <person name="Pohl C."/>
            <person name="Wallis J.W."/>
            <person name="Spieth J."/>
            <person name="Bieri T.A."/>
            <person name="Berkowicz N."/>
            <person name="Nelson J.O."/>
            <person name="Osborne J."/>
            <person name="Ding L."/>
            <person name="Meyer R."/>
            <person name="Sabo A."/>
            <person name="Shotland Y."/>
            <person name="Sinha P."/>
            <person name="Wohldmann P.E."/>
            <person name="Cook L.L."/>
            <person name="Hickenbotham M.T."/>
            <person name="Eldred J."/>
            <person name="Williams D."/>
            <person name="Jones T.A."/>
            <person name="She X."/>
            <person name="Ciccarelli F.D."/>
            <person name="Izaurralde E."/>
            <person name="Taylor J."/>
            <person name="Schmutz J."/>
            <person name="Myers R.M."/>
            <person name="Cox D.R."/>
            <person name="Huang X."/>
            <person name="McPherson J.D."/>
            <person name="Mardis E.R."/>
            <person name="Clifton S.W."/>
            <person name="Warren W.C."/>
            <person name="Chinwalla A.T."/>
            <person name="Eddy S.R."/>
            <person name="Marra M.A."/>
            <person name="Ovcharenko I."/>
            <person name="Furey T.S."/>
            <person name="Miller W."/>
            <person name="Eichler E.E."/>
            <person name="Bork P."/>
            <person name="Suyama M."/>
            <person name="Torrents D."/>
            <person name="Waterston R.H."/>
            <person name="Wilson R.K."/>
        </authorList>
    </citation>
    <scope>NUCLEOTIDE SEQUENCE [LARGE SCALE GENOMIC DNA]</scope>
</reference>
<reference key="10">
    <citation type="submission" date="2005-07" db="EMBL/GenBank/DDBJ databases">
        <authorList>
            <person name="Mural R.J."/>
            <person name="Istrail S."/>
            <person name="Sutton G."/>
            <person name="Florea L."/>
            <person name="Halpern A.L."/>
            <person name="Mobarry C.M."/>
            <person name="Lippert R."/>
            <person name="Walenz B."/>
            <person name="Shatkay H."/>
            <person name="Dew I."/>
            <person name="Miller J.R."/>
            <person name="Flanigan M.J."/>
            <person name="Edwards N.J."/>
            <person name="Bolanos R."/>
            <person name="Fasulo D."/>
            <person name="Halldorsson B.V."/>
            <person name="Hannenhalli S."/>
            <person name="Turner R."/>
            <person name="Yooseph S."/>
            <person name="Lu F."/>
            <person name="Nusskern D.R."/>
            <person name="Shue B.C."/>
            <person name="Zheng X.H."/>
            <person name="Zhong F."/>
            <person name="Delcher A.L."/>
            <person name="Huson D.H."/>
            <person name="Kravitz S.A."/>
            <person name="Mouchard L."/>
            <person name="Reinert K."/>
            <person name="Remington K.A."/>
            <person name="Clark A.G."/>
            <person name="Waterman M.S."/>
            <person name="Eichler E.E."/>
            <person name="Adams M.D."/>
            <person name="Hunkapiller M.W."/>
            <person name="Myers E.W."/>
            <person name="Venter J.C."/>
        </authorList>
    </citation>
    <scope>NUCLEOTIDE SEQUENCE [LARGE SCALE GENOMIC DNA]</scope>
</reference>
<reference key="11">
    <citation type="journal article" date="2006" name="Genes Dev.">
        <title>Defects in energy homeostasis in Leigh syndrome French Canadian variant through PGC-1alpha/LRP130 complex.</title>
        <authorList>
            <person name="Cooper M.P."/>
            <person name="Qu L."/>
            <person name="Rohas L.M."/>
            <person name="Lin J."/>
            <person name="Yang W."/>
            <person name="Erdjument-Bromage H."/>
            <person name="Tempst P."/>
            <person name="Spiegelman B.M."/>
        </authorList>
    </citation>
    <scope>INTERACTION WITH LRPPRC</scope>
</reference>
<reference key="12">
    <citation type="journal article" date="2006" name="Cell Metab.">
        <title>GCN5 acetyltransferase complex controls glucose metabolism through transcriptional repression of PGC-1alpha.</title>
        <authorList>
            <person name="Lerin C."/>
            <person name="Rodgers J.T."/>
            <person name="Kalume D.E."/>
            <person name="Kim S.H."/>
            <person name="Pandey A."/>
            <person name="Puigserver P."/>
        </authorList>
    </citation>
    <scope>FUNCTION</scope>
    <scope>ACETYLATION BY KAT2A</scope>
</reference>
<reference key="13">
    <citation type="journal article" date="2010" name="Biochim. Biophys. Acta">
        <title>Nutrient-dependent regulation of PGC-1alpha's acetylation state and metabolic function through the enzymatic activities of Sirt1/GCN5.</title>
        <authorList>
            <person name="Dominy J.E. Jr."/>
            <person name="Lee Y."/>
            <person name="Gerhart-Hines Z."/>
            <person name="Puigserver P."/>
        </authorList>
    </citation>
    <scope>FUNCTION</scope>
    <scope>REGULATION BY ACETYLATION</scope>
</reference>
<reference key="14">
    <citation type="journal article" date="2011" name="Cell">
        <title>PARIS (ZNF746) repression of PGC-1alpha contributes to neurodegeneration in Parkinson's disease.</title>
        <authorList>
            <person name="Shin J.H."/>
            <person name="Ko H.S."/>
            <person name="Kang H."/>
            <person name="Lee Y."/>
            <person name="Lee Y.I."/>
            <person name="Pletinkova O."/>
            <person name="Troconso J.C."/>
            <person name="Dawson V.L."/>
            <person name="Dawson T.M."/>
        </authorList>
    </citation>
    <scope>FUNCTION</scope>
    <scope>INDUCTION</scope>
</reference>
<reference key="15">
    <citation type="journal article" date="2012" name="Mol. Cell">
        <title>The deacetylase Sirt6 activates the acetyltransferase GCN5 and suppresses hepatic gluconeogenesis.</title>
        <authorList>
            <person name="Dominy J.E. Jr."/>
            <person name="Lee Y."/>
            <person name="Jedrychowski M.P."/>
            <person name="Chim H."/>
            <person name="Jurczak M.J."/>
            <person name="Camporez J.P."/>
            <person name="Ruan H.B."/>
            <person name="Feldman J."/>
            <person name="Pierce K."/>
            <person name="Mostoslavsky R."/>
            <person name="Denu J.M."/>
            <person name="Clish C.B."/>
            <person name="Yang X."/>
            <person name="Shulman G.I."/>
            <person name="Gygi S.P."/>
            <person name="Puigserver P."/>
        </authorList>
    </citation>
    <scope>FUNCTION</scope>
    <scope>ACETYLATION BY KAT2A</scope>
</reference>
<reference key="16">
    <citation type="journal article" date="2012" name="Mol. Cell. Biol.">
        <title>RNF34 is a cold-regulated E3 ubiquitin ligase for PGC-1alpha and modulates brown fat cell metabolism.</title>
        <authorList>
            <person name="Wei P."/>
            <person name="Pan D."/>
            <person name="Mao C."/>
            <person name="Wang Y.X."/>
        </authorList>
    </citation>
    <scope>UBIQUITINATION BY RNF34</scope>
</reference>
<reference key="17">
    <citation type="journal article" date="2013" name="J. Biol. Chem.">
        <title>Peroxisome proliferator-activated receptor gamma coactivator 1 (PGC-1)- and estrogen-related receptor (ERR)-induced regulator in muscle 1 (Perm1) is a tissue-specific regulator of oxidative capacity in skeletal muscle cells.</title>
        <authorList>
            <person name="Cho Y."/>
            <person name="Hazen B.C."/>
            <person name="Russell A.P."/>
            <person name="Kralli A."/>
        </authorList>
    </citation>
    <scope>FUNCTION</scope>
</reference>
<reference key="18">
    <citation type="journal article" date="2020" name="Structure">
        <title>Integrated structural modeling of full-length LRH-1 reveals inter-domain interactions contribute to receptor structure and function.</title>
        <authorList>
            <person name="Seacrist C.D."/>
            <person name="Kuenze G."/>
            <person name="Hoffmann R.M."/>
            <person name="Moeller B.E."/>
            <person name="Burke J.E."/>
            <person name="Meiler J."/>
            <person name="Blind R.D."/>
        </authorList>
    </citation>
    <scope>FUNCTION</scope>
    <scope>INTERACTION WITH NR5A2</scope>
</reference>
<reference evidence="25" key="19">
    <citation type="journal article" date="2017" name="Mol. Pharmacol.">
        <title>Structure and dynamics of the liver receptor homolog 1-PGC1alpha complex.</title>
        <authorList>
            <person name="Mays S.G."/>
            <person name="Okafor C.D."/>
            <person name="Tuntland M.L."/>
            <person name="Whitby R.J."/>
            <person name="Dharmarajan V."/>
            <person name="Stec J."/>
            <person name="Griffin P.R."/>
            <person name="Ortlund E.A."/>
        </authorList>
    </citation>
    <scope>X-RAY CRYSTALLOGRAPHY (1.96 ANGSTROMS) OF 139-152 IN COMPLEX WITH NR5A2</scope>
    <scope>FUNCTION</scope>
    <scope>INTERACTION WITH NR5A2</scope>
</reference>
<accession>Q9UBK2</accession>
<accession>B7Z406</accession>
<accession>G8DM16</accession>
<accession>I3RTT5</accession>
<accession>I3RTT6</accession>
<accession>I3RTT7</accession>
<accession>I3RTT8</accession>
<accession>I3RTT9</accession>
<accession>Q3LIG1</accession>
<accession>Q4W5M7</accession>
<accession>Q9UN32</accession>
<sequence>MAWDMCNQDSESVWSDIECAALVGEDQPLCPDLPELDLSELDVNDLDTDSFLGGLKWCSDQSEIISNQYNNEPSNIFEKIDEENEANLLAVLTETLDSLPVDEDGLPSFDALTDGDVTTDNEASPSSMPDGTPPPQEAEEPSLLKKLLLAPANTQLSYNECSGLSTQNHANHNHRIRTNPAIVKTENSWSNKAKSICQQQKPQRRPCSELLKYLTTNDDPPHTKPTENRNSSRDKCTSKKKSHTQSQSQHLQAKPTTLSLPLTPESPNDPKGSPFENKTIERTLSVELSGTAGLTPPTTPPHKANQDNPFRASPKLKSSCKTVVPPPSKKPRYSESSGTQGNNSTKKGPEQSELYAQLSKSSVLTGGHEERKTKRPSLRLFGDHDYCQSINSKTEILINISQELQDSRQLENKDVSSDWQGQICSSTDSDQCYLRETLEASKQVSPCSTRKQLQDQEIRAELNKHFGHPSQAVFDDEADKTGELRDSDFSNEQFSKLPMFINSGLAMDGLFDDSEDESDKLSYPWDGTQSYSLFNVSPSCSSFNSPCRDSVSPPKSLFSQRPQRMRSRSRSFSRHRSCSRSPYSRSRSRSPGSRSSSRSCYYYESSHYRHRTHRNSPLYVRSRSRSPYSRRPRYDSYEEYQHERLKREEYRREYEKRESERAKQRERQRQKAIEERRVIYVGKIRPDTTRTELRDRFEVFGEIEECTVNLRDDGDSYGFITYRYTCDAFAALENGYTLRRSNETDFELYFCGRKQFFKSNYADLDSNSDDFDPASTKSKYDSLDFDSLLKEAQRSLRR</sequence>
<gene>
    <name type="primary">PPARGC1A</name>
    <name type="synonym">LEM6</name>
    <name type="synonym">PGC1</name>
    <name evidence="20" type="synonym">PGC1A</name>
    <name type="synonym">PPARGC1</name>
</gene>
<proteinExistence type="evidence at protein level"/>
<evidence type="ECO:0000250" key="1">
    <source>
        <dbReference type="UniProtKB" id="O70343"/>
    </source>
</evidence>
<evidence type="ECO:0000255" key="2">
    <source>
        <dbReference type="PROSITE-ProRule" id="PRU00176"/>
    </source>
</evidence>
<evidence type="ECO:0000256" key="3">
    <source>
        <dbReference type="SAM" id="MobiDB-lite"/>
    </source>
</evidence>
<evidence type="ECO:0000269" key="4">
    <source>
    </source>
</evidence>
<evidence type="ECO:0000269" key="5">
    <source>
    </source>
</evidence>
<evidence type="ECO:0000269" key="6">
    <source>
    </source>
</evidence>
<evidence type="ECO:0000269" key="7">
    <source>
    </source>
</evidence>
<evidence type="ECO:0000269" key="8">
    <source>
    </source>
</evidence>
<evidence type="ECO:0000269" key="9">
    <source>
    </source>
</evidence>
<evidence type="ECO:0000269" key="10">
    <source>
    </source>
</evidence>
<evidence type="ECO:0000269" key="11">
    <source>
    </source>
</evidence>
<evidence type="ECO:0000269" key="12">
    <source>
    </source>
</evidence>
<evidence type="ECO:0000269" key="13">
    <source>
    </source>
</evidence>
<evidence type="ECO:0000269" key="14">
    <source>
    </source>
</evidence>
<evidence type="ECO:0000269" key="15">
    <source>
    </source>
</evidence>
<evidence type="ECO:0000269" key="16">
    <source>
    </source>
</evidence>
<evidence type="ECO:0000269" key="17">
    <source>
    </source>
</evidence>
<evidence type="ECO:0000303" key="18">
    <source>
    </source>
</evidence>
<evidence type="ECO:0000303" key="19">
    <source>
    </source>
</evidence>
<evidence type="ECO:0000303" key="20">
    <source>
    </source>
</evidence>
<evidence type="ECO:0000303" key="21">
    <source>
    </source>
</evidence>
<evidence type="ECO:0000303" key="22">
    <source>
    </source>
</evidence>
<evidence type="ECO:0000303" key="23">
    <source ref="6"/>
</evidence>
<evidence type="ECO:0000305" key="24"/>
<evidence type="ECO:0007744" key="25">
    <source>
        <dbReference type="PDB" id="5UNJ"/>
    </source>
</evidence>
<evidence type="ECO:0007829" key="26">
    <source>
        <dbReference type="PDB" id="3D24"/>
    </source>
</evidence>
<evidence type="ECO:0007829" key="27">
    <source>
        <dbReference type="PDB" id="8BF1"/>
    </source>
</evidence>